<keyword id="KW-0007">Acetylation</keyword>
<keyword id="KW-0349">Heme</keyword>
<keyword id="KW-0408">Iron</keyword>
<keyword id="KW-0479">Metal-binding</keyword>
<keyword id="KW-0561">Oxygen transport</keyword>
<keyword id="KW-0597">Phosphoprotein</keyword>
<keyword id="KW-1185">Reference proteome</keyword>
<keyword id="KW-0702">S-nitrosylation</keyword>
<keyword id="KW-0813">Transport</keyword>
<gene>
    <name type="primary">HBG1</name>
</gene>
<proteinExistence type="evidence at transcript level"/>
<organism>
    <name type="scientific">Gorilla gorilla gorilla</name>
    <name type="common">Western lowland gorilla</name>
    <dbReference type="NCBI Taxonomy" id="9595"/>
    <lineage>
        <taxon>Eukaryota</taxon>
        <taxon>Metazoa</taxon>
        <taxon>Chordata</taxon>
        <taxon>Craniata</taxon>
        <taxon>Vertebrata</taxon>
        <taxon>Euteleostomi</taxon>
        <taxon>Mammalia</taxon>
        <taxon>Eutheria</taxon>
        <taxon>Euarchontoglires</taxon>
        <taxon>Primates</taxon>
        <taxon>Haplorrhini</taxon>
        <taxon>Catarrhini</taxon>
        <taxon>Hominidae</taxon>
        <taxon>Gorilla</taxon>
    </lineage>
</organism>
<accession>P62741</accession>
<accession>P06641</accession>
<evidence type="ECO:0000250" key="1">
    <source>
        <dbReference type="UniProtKB" id="P68871"/>
    </source>
</evidence>
<evidence type="ECO:0000250" key="2">
    <source>
        <dbReference type="UniProtKB" id="P69891"/>
    </source>
</evidence>
<evidence type="ECO:0000255" key="3">
    <source>
        <dbReference type="PROSITE-ProRule" id="PRU00238"/>
    </source>
</evidence>
<sequence>MGHFTEEDKATITSLWGKVNVEDAGGETLGRLLVVYPWTQRFFDSFGNLSSASAIMGNPKVKAHGKKVLTSLGGAIKHLDDLKGTFAQLSELHCDKLHVDPENFRLLGNVLVTVLAIHFGKEFTPEVQASWQKMVTAVASALSSRYH</sequence>
<feature type="initiator methionine" description="Removed" evidence="2">
    <location>
        <position position="1"/>
    </location>
</feature>
<feature type="chain" id="PRO_0000053251" description="Hemoglobin subunit gamma-1">
    <location>
        <begin position="2"/>
        <end position="147"/>
    </location>
</feature>
<feature type="domain" description="Globin" evidence="3">
    <location>
        <begin position="3"/>
        <end position="147"/>
    </location>
</feature>
<feature type="binding site" description="distal binding residue" evidence="3">
    <location>
        <position position="64"/>
    </location>
    <ligand>
        <name>heme b</name>
        <dbReference type="ChEBI" id="CHEBI:60344"/>
    </ligand>
    <ligandPart>
        <name>Fe</name>
        <dbReference type="ChEBI" id="CHEBI:18248"/>
    </ligandPart>
</feature>
<feature type="binding site" description="proximal binding residue" evidence="3">
    <location>
        <position position="93"/>
    </location>
    <ligand>
        <name>heme b</name>
        <dbReference type="ChEBI" id="CHEBI:60344"/>
    </ligand>
    <ligandPart>
        <name>Fe</name>
        <dbReference type="ChEBI" id="CHEBI:18248"/>
    </ligandPart>
</feature>
<feature type="modified residue" description="N-acetylglycine" evidence="2">
    <location>
        <position position="2"/>
    </location>
</feature>
<feature type="modified residue" description="Phosphothreonine" evidence="1">
    <location>
        <position position="13"/>
    </location>
</feature>
<feature type="modified residue" description="Phosphoserine" evidence="2">
    <location>
        <position position="45"/>
    </location>
</feature>
<feature type="modified residue" description="Phosphoserine" evidence="2">
    <location>
        <position position="51"/>
    </location>
</feature>
<feature type="modified residue" description="Phosphoserine" evidence="2">
    <location>
        <position position="53"/>
    </location>
</feature>
<feature type="modified residue" description="N6-acetyllysine" evidence="1">
    <location>
        <position position="60"/>
    </location>
</feature>
<feature type="modified residue" description="N6-acetyllysine" evidence="1">
    <location>
        <position position="83"/>
    </location>
</feature>
<feature type="modified residue" description="S-nitrosocysteine" evidence="1">
    <location>
        <position position="94"/>
    </location>
</feature>
<feature type="modified residue" description="Phosphoserine" evidence="2">
    <location>
        <position position="140"/>
    </location>
</feature>
<name>HBG1_GORGO</name>
<dbReference type="EMBL" id="X03112">
    <property type="protein sequence ID" value="CAA26894.1"/>
    <property type="molecule type" value="Genomic_DNA"/>
</dbReference>
<dbReference type="EMBL" id="M92295">
    <property type="protein sequence ID" value="AAA35466.1"/>
    <property type="molecule type" value="Genomic_DNA"/>
</dbReference>
<dbReference type="PIR" id="I37022">
    <property type="entry name" value="I37022"/>
</dbReference>
<dbReference type="SMR" id="P62741"/>
<dbReference type="STRING" id="9593.ENSGGOP00000025490"/>
<dbReference type="InParanoid" id="P62741"/>
<dbReference type="Proteomes" id="UP000001519">
    <property type="component" value="Unplaced"/>
</dbReference>
<dbReference type="GO" id="GO:0031838">
    <property type="term" value="C:haptoglobin-hemoglobin complex"/>
    <property type="evidence" value="ECO:0000318"/>
    <property type="project" value="GO_Central"/>
</dbReference>
<dbReference type="GO" id="GO:0005833">
    <property type="term" value="C:hemoglobin complex"/>
    <property type="evidence" value="ECO:0000318"/>
    <property type="project" value="GO_Central"/>
</dbReference>
<dbReference type="GO" id="GO:0020037">
    <property type="term" value="F:heme binding"/>
    <property type="evidence" value="ECO:0000318"/>
    <property type="project" value="GO_Central"/>
</dbReference>
<dbReference type="GO" id="GO:0031721">
    <property type="term" value="F:hemoglobin alpha binding"/>
    <property type="evidence" value="ECO:0000318"/>
    <property type="project" value="GO_Central"/>
</dbReference>
<dbReference type="GO" id="GO:0046872">
    <property type="term" value="F:metal ion binding"/>
    <property type="evidence" value="ECO:0007669"/>
    <property type="project" value="UniProtKB-KW"/>
</dbReference>
<dbReference type="GO" id="GO:0019825">
    <property type="term" value="F:oxygen binding"/>
    <property type="evidence" value="ECO:0000318"/>
    <property type="project" value="GO_Central"/>
</dbReference>
<dbReference type="GO" id="GO:0005344">
    <property type="term" value="F:oxygen carrier activity"/>
    <property type="evidence" value="ECO:0000318"/>
    <property type="project" value="GO_Central"/>
</dbReference>
<dbReference type="GO" id="GO:0098869">
    <property type="term" value="P:cellular oxidant detoxification"/>
    <property type="evidence" value="ECO:0007669"/>
    <property type="project" value="GOC"/>
</dbReference>
<dbReference type="GO" id="GO:0042744">
    <property type="term" value="P:hydrogen peroxide catabolic process"/>
    <property type="evidence" value="ECO:0000318"/>
    <property type="project" value="GO_Central"/>
</dbReference>
<dbReference type="CDD" id="cd08925">
    <property type="entry name" value="Hb-beta-like"/>
    <property type="match status" value="1"/>
</dbReference>
<dbReference type="FunFam" id="1.10.490.10:FF:000001">
    <property type="entry name" value="Hemoglobin subunit beta"/>
    <property type="match status" value="1"/>
</dbReference>
<dbReference type="Gene3D" id="1.10.490.10">
    <property type="entry name" value="Globins"/>
    <property type="match status" value="1"/>
</dbReference>
<dbReference type="InterPro" id="IPR000971">
    <property type="entry name" value="Globin"/>
</dbReference>
<dbReference type="InterPro" id="IPR009050">
    <property type="entry name" value="Globin-like_sf"/>
</dbReference>
<dbReference type="InterPro" id="IPR012292">
    <property type="entry name" value="Globin/Proto"/>
</dbReference>
<dbReference type="InterPro" id="IPR002337">
    <property type="entry name" value="Hemoglobin_b"/>
</dbReference>
<dbReference type="InterPro" id="IPR050056">
    <property type="entry name" value="Hemoglobin_oxygen_transport"/>
</dbReference>
<dbReference type="PANTHER" id="PTHR11442">
    <property type="entry name" value="HEMOGLOBIN FAMILY MEMBER"/>
    <property type="match status" value="1"/>
</dbReference>
<dbReference type="PANTHER" id="PTHR11442:SF52">
    <property type="entry name" value="HEMOGLOBIN SUBUNIT GAMMA-1"/>
    <property type="match status" value="1"/>
</dbReference>
<dbReference type="Pfam" id="PF00042">
    <property type="entry name" value="Globin"/>
    <property type="match status" value="1"/>
</dbReference>
<dbReference type="PRINTS" id="PR00814">
    <property type="entry name" value="BETAHAEM"/>
</dbReference>
<dbReference type="SUPFAM" id="SSF46458">
    <property type="entry name" value="Globin-like"/>
    <property type="match status" value="1"/>
</dbReference>
<dbReference type="PROSITE" id="PS01033">
    <property type="entry name" value="GLOBIN"/>
    <property type="match status" value="1"/>
</dbReference>
<reference key="1">
    <citation type="journal article" date="1984" name="Mol. Biol. Evol.">
        <title>The sequence of the gorilla fetal globin genes: evidence for multiple gene conversions in human evolution.</title>
        <authorList>
            <person name="Scott A.F."/>
            <person name="Heath P."/>
            <person name="Trusko S."/>
            <person name="Boyer S.H."/>
            <person name="Prass W."/>
            <person name="Goodman M."/>
            <person name="Czelusniak J."/>
            <person name="Chang L.-Y.E."/>
            <person name="Slightom J.L."/>
        </authorList>
    </citation>
    <scope>NUCLEOTIDE SEQUENCE [GENOMIC DNA]</scope>
</reference>
<reference key="2">
    <citation type="journal article" date="1992" name="Mol. Phylogenet. Evol.">
        <title>Reexamination of the African hominoid trichotomy with additional sequences from the primate beta-globin gene cluster.</title>
        <authorList>
            <person name="Bailey W.J."/>
            <person name="Hayasaka K."/>
            <person name="Skinner C.G."/>
            <person name="Kehoe S."/>
            <person name="Sieu L.C."/>
            <person name="Slightom J.L."/>
            <person name="Goodman M."/>
        </authorList>
    </citation>
    <scope>NUCLEOTIDE SEQUENCE [GENOMIC DNA]</scope>
</reference>
<comment type="function">
    <text evidence="2">Gamma chains make up the fetal hemoglobin F, in combination with alpha chains.</text>
</comment>
<comment type="subunit">
    <text evidence="2">Heterotetramer of two alpha chains and two gamma chains in fetal hemoglobin (Hb F).</text>
</comment>
<comment type="tissue specificity">
    <text>Red blood cells.</text>
</comment>
<comment type="similarity">
    <text evidence="3">Belongs to the globin family.</text>
</comment>
<protein>
    <recommendedName>
        <fullName>Hemoglobin subunit gamma-1</fullName>
    </recommendedName>
    <alternativeName>
        <fullName>Gamma-1-globin</fullName>
    </alternativeName>
    <alternativeName>
        <fullName>Hemoglobin gamma-1 chain</fullName>
    </alternativeName>
    <alternativeName>
        <fullName>Hemoglobin gamma-A chain</fullName>
    </alternativeName>
</protein>